<sequence>MFGYMEISVRVEIGKQNSRIHKLELWKLMEEGLHTLMKEEKLDIMLKEEANFGFCRWLNTRGNWLYLEDMRKPILIEFQNFFNCLNYPSRVYKLTVQNNDYKLGSIRDLRIKLFFF</sequence>
<name>VPA2_BEFVB</name>
<dbReference type="EMBL" id="AF234533">
    <property type="protein sequence ID" value="AAG10416.1"/>
    <property type="molecule type" value="Genomic_RNA"/>
</dbReference>
<dbReference type="RefSeq" id="NP_065405.1">
    <property type="nucleotide sequence ID" value="NC_002526.1"/>
</dbReference>
<dbReference type="GeneID" id="911731"/>
<dbReference type="KEGG" id="vg:911731"/>
<dbReference type="Proteomes" id="UP000008588">
    <property type="component" value="Segment"/>
</dbReference>
<protein>
    <recommendedName>
        <fullName>Protein alpha-2</fullName>
    </recommendedName>
</protein>
<organismHost>
    <name type="scientific">Bos taurus</name>
    <name type="common">Bovine</name>
    <dbReference type="NCBI Taxonomy" id="9913"/>
</organismHost>
<organismHost>
    <name type="scientific">Bubalus bubalis</name>
    <name type="common">Domestic water buffalo</name>
    <dbReference type="NCBI Taxonomy" id="89462"/>
</organismHost>
<organismHost>
    <name type="scientific">Culicoides</name>
    <dbReference type="NCBI Taxonomy" id="58271"/>
</organismHost>
<organismHost>
    <name type="scientific">Syncerus caffer</name>
    <name type="common">African buffalo</name>
    <dbReference type="NCBI Taxonomy" id="9970"/>
</organismHost>
<reference key="1">
    <citation type="journal article" date="1997" name="J. Gen. Virol.">
        <title>Genome organization and transcription strategy in the complex GNS-L intergenic region of bovine ephemeral fever rhabdovirus.</title>
        <authorList>
            <person name="McWilliam S.M."/>
            <person name="Kongsuwan K."/>
            <person name="Cowley J.A."/>
            <person name="Byrne K.A."/>
            <person name="Walker P.J."/>
        </authorList>
    </citation>
    <scope>NUCLEOTIDE SEQUENCE [GENOMIC RNA]</scope>
</reference>
<organism>
    <name type="scientific">Bovine ephemeral fever virus (strain BB7721)</name>
    <name type="common">BEFV</name>
    <dbReference type="NCBI Taxonomy" id="928297"/>
    <lineage>
        <taxon>Viruses</taxon>
        <taxon>Riboviria</taxon>
        <taxon>Orthornavirae</taxon>
        <taxon>Negarnaviricota</taxon>
        <taxon>Haploviricotina</taxon>
        <taxon>Monjiviricetes</taxon>
        <taxon>Mononegavirales</taxon>
        <taxon>Rhabdoviridae</taxon>
        <taxon>Alpharhabdovirinae</taxon>
        <taxon>Ephemerovirus</taxon>
        <taxon>Ephemerovirus febris</taxon>
    </lineage>
</organism>
<accession>Q9DHF5</accession>
<proteinExistence type="predicted"/>
<keyword id="KW-1185">Reference proteome</keyword>
<gene>
    <name type="primary">alpha</name>
</gene>
<feature type="chain" id="PRO_0000299223" description="Protein alpha-2">
    <location>
        <begin position="1"/>
        <end position="116"/>
    </location>
</feature>